<comment type="function">
    <text evidence="1">Modulates RecA activity through direct physical interaction. Can inhibit both RecA recombinase and coprotease activities. May have a regulatory role during the SOS response. Inhibits DNA strand exchange in vitro (By similarity).</text>
</comment>
<comment type="subcellular location">
    <subcellularLocation>
        <location evidence="2">Cytoplasm</location>
    </subcellularLocation>
</comment>
<comment type="similarity">
    <text evidence="2">Belongs to the RecX family.</text>
</comment>
<proteinExistence type="inferred from homology"/>
<reference key="1">
    <citation type="journal article" date="2002" name="Nucleic Acids Res.">
        <title>Genome sequence of Shigella flexneri 2a: insights into pathogenicity through comparison with genomes of Escherichia coli K12 and O157.</title>
        <authorList>
            <person name="Jin Q."/>
            <person name="Yuan Z."/>
            <person name="Xu J."/>
            <person name="Wang Y."/>
            <person name="Shen Y."/>
            <person name="Lu W."/>
            <person name="Wang J."/>
            <person name="Liu H."/>
            <person name="Yang J."/>
            <person name="Yang F."/>
            <person name="Zhang X."/>
            <person name="Zhang J."/>
            <person name="Yang G."/>
            <person name="Wu H."/>
            <person name="Qu D."/>
            <person name="Dong J."/>
            <person name="Sun L."/>
            <person name="Xue Y."/>
            <person name="Zhao A."/>
            <person name="Gao Y."/>
            <person name="Zhu J."/>
            <person name="Kan B."/>
            <person name="Ding K."/>
            <person name="Chen S."/>
            <person name="Cheng H."/>
            <person name="Yao Z."/>
            <person name="He B."/>
            <person name="Chen R."/>
            <person name="Ma D."/>
            <person name="Qiang B."/>
            <person name="Wen Y."/>
            <person name="Hou Y."/>
            <person name="Yu J."/>
        </authorList>
    </citation>
    <scope>NUCLEOTIDE SEQUENCE [LARGE SCALE GENOMIC DNA]</scope>
    <source>
        <strain>301 / Serotype 2a</strain>
    </source>
</reference>
<reference key="2">
    <citation type="journal article" date="2003" name="Infect. Immun.">
        <title>Complete genome sequence and comparative genomics of Shigella flexneri serotype 2a strain 2457T.</title>
        <authorList>
            <person name="Wei J."/>
            <person name="Goldberg M.B."/>
            <person name="Burland V."/>
            <person name="Venkatesan M.M."/>
            <person name="Deng W."/>
            <person name="Fournier G."/>
            <person name="Mayhew G.F."/>
            <person name="Plunkett G. III"/>
            <person name="Rose D.J."/>
            <person name="Darling A."/>
            <person name="Mau B."/>
            <person name="Perna N.T."/>
            <person name="Payne S.M."/>
            <person name="Runyen-Janecky L.J."/>
            <person name="Zhou S."/>
            <person name="Schwartz D.C."/>
            <person name="Blattner F.R."/>
        </authorList>
    </citation>
    <scope>NUCLEOTIDE SEQUENCE [LARGE SCALE GENOMIC DNA]</scope>
    <source>
        <strain>ATCC 700930 / 2457T / Serotype 2a</strain>
    </source>
</reference>
<protein>
    <recommendedName>
        <fullName>Regulatory protein RecX</fullName>
    </recommendedName>
</protein>
<organism>
    <name type="scientific">Shigella flexneri</name>
    <dbReference type="NCBI Taxonomy" id="623"/>
    <lineage>
        <taxon>Bacteria</taxon>
        <taxon>Pseudomonadati</taxon>
        <taxon>Pseudomonadota</taxon>
        <taxon>Gammaproteobacteria</taxon>
        <taxon>Enterobacterales</taxon>
        <taxon>Enterobacteriaceae</taxon>
        <taxon>Shigella</taxon>
    </lineage>
</organism>
<keyword id="KW-0963">Cytoplasm</keyword>
<keyword id="KW-0227">DNA damage</keyword>
<keyword id="KW-0234">DNA repair</keyword>
<keyword id="KW-1185">Reference proteome</keyword>
<keyword id="KW-0742">SOS response</keyword>
<name>RECX_SHIFL</name>
<accession>P66001</accession>
<accession>P59208</accession>
<accession>Q8X875</accession>
<dbReference type="EMBL" id="AE005674">
    <property type="protein sequence ID" value="AAN44213.1"/>
    <property type="molecule type" value="Genomic_DNA"/>
</dbReference>
<dbReference type="EMBL" id="AE014073">
    <property type="protein sequence ID" value="AAP18039.1"/>
    <property type="molecule type" value="Genomic_DNA"/>
</dbReference>
<dbReference type="RefSeq" id="NP_708506.1">
    <property type="nucleotide sequence ID" value="NC_004337.2"/>
</dbReference>
<dbReference type="RefSeq" id="WP_000140506.1">
    <property type="nucleotide sequence ID" value="NZ_WPGW01000014.1"/>
</dbReference>
<dbReference type="SMR" id="P66001"/>
<dbReference type="STRING" id="198214.SF2721"/>
<dbReference type="PaxDb" id="198214-SF2721"/>
<dbReference type="DNASU" id="1079177"/>
<dbReference type="GeneID" id="1025697"/>
<dbReference type="GeneID" id="75172780"/>
<dbReference type="KEGG" id="sfl:SF2721"/>
<dbReference type="KEGG" id="sfx:S2912"/>
<dbReference type="PATRIC" id="fig|198214.7.peg.3241"/>
<dbReference type="HOGENOM" id="CLU_066607_3_2_6"/>
<dbReference type="Proteomes" id="UP000001006">
    <property type="component" value="Chromosome"/>
</dbReference>
<dbReference type="Proteomes" id="UP000002673">
    <property type="component" value="Chromosome"/>
</dbReference>
<dbReference type="GO" id="GO:0005737">
    <property type="term" value="C:cytoplasm"/>
    <property type="evidence" value="ECO:0007669"/>
    <property type="project" value="UniProtKB-SubCell"/>
</dbReference>
<dbReference type="GO" id="GO:0006281">
    <property type="term" value="P:DNA repair"/>
    <property type="evidence" value="ECO:0007669"/>
    <property type="project" value="UniProtKB-KW"/>
</dbReference>
<dbReference type="GO" id="GO:0006282">
    <property type="term" value="P:regulation of DNA repair"/>
    <property type="evidence" value="ECO:0007669"/>
    <property type="project" value="UniProtKB-UniRule"/>
</dbReference>
<dbReference type="GO" id="GO:0009432">
    <property type="term" value="P:SOS response"/>
    <property type="evidence" value="ECO:0007669"/>
    <property type="project" value="UniProtKB-KW"/>
</dbReference>
<dbReference type="FunFam" id="1.10.10.10:FF:000133">
    <property type="entry name" value="Regulatory protein RecX"/>
    <property type="match status" value="1"/>
</dbReference>
<dbReference type="FunFam" id="1.10.10.10:FF:000134">
    <property type="entry name" value="Regulatory protein RecX"/>
    <property type="match status" value="1"/>
</dbReference>
<dbReference type="FunFam" id="1.10.10.10:FF:000209">
    <property type="entry name" value="Regulatory protein RecX"/>
    <property type="match status" value="1"/>
</dbReference>
<dbReference type="Gene3D" id="1.10.10.10">
    <property type="entry name" value="Winged helix-like DNA-binding domain superfamily/Winged helix DNA-binding domain"/>
    <property type="match status" value="3"/>
</dbReference>
<dbReference type="HAMAP" id="MF_01114">
    <property type="entry name" value="RecX"/>
    <property type="match status" value="1"/>
</dbReference>
<dbReference type="InterPro" id="IPR053926">
    <property type="entry name" value="RecX_HTH_1st"/>
</dbReference>
<dbReference type="InterPro" id="IPR053924">
    <property type="entry name" value="RecX_HTH_2nd"/>
</dbReference>
<dbReference type="InterPro" id="IPR053925">
    <property type="entry name" value="RecX_HTH_3rd"/>
</dbReference>
<dbReference type="InterPro" id="IPR003783">
    <property type="entry name" value="Regulatory_RecX"/>
</dbReference>
<dbReference type="InterPro" id="IPR036388">
    <property type="entry name" value="WH-like_DNA-bd_sf"/>
</dbReference>
<dbReference type="NCBIfam" id="NF001052">
    <property type="entry name" value="PRK00117.1-1"/>
    <property type="match status" value="1"/>
</dbReference>
<dbReference type="PANTHER" id="PTHR33602">
    <property type="entry name" value="REGULATORY PROTEIN RECX FAMILY PROTEIN"/>
    <property type="match status" value="1"/>
</dbReference>
<dbReference type="PANTHER" id="PTHR33602:SF1">
    <property type="entry name" value="REGULATORY PROTEIN RECX FAMILY PROTEIN"/>
    <property type="match status" value="1"/>
</dbReference>
<dbReference type="Pfam" id="PF21982">
    <property type="entry name" value="RecX_HTH1"/>
    <property type="match status" value="1"/>
</dbReference>
<dbReference type="Pfam" id="PF02631">
    <property type="entry name" value="RecX_HTH2"/>
    <property type="match status" value="1"/>
</dbReference>
<dbReference type="Pfam" id="PF21981">
    <property type="entry name" value="RecX_HTH3"/>
    <property type="match status" value="1"/>
</dbReference>
<sequence>MTESTSRRPAYARLLDRAVRILAVRDHSEQELRRKLAAPIMGKNGPEEIDATAEDYERVIAWCHEHGYLDDSRFVARFIASRSRKGYGPARIRQELNQKGISREATEKAMRECDIDWCALARDQATRKYGEPLPTVFSEKVKIQRFLLYRGYLMEDIQDIWRNFAD</sequence>
<feature type="chain" id="PRO_0000162468" description="Regulatory protein RecX">
    <location>
        <begin position="1"/>
        <end position="166"/>
    </location>
</feature>
<evidence type="ECO:0000250" key="1"/>
<evidence type="ECO:0000305" key="2"/>
<gene>
    <name type="primary">recX</name>
    <name type="ordered locus">SF2721</name>
    <name type="ordered locus">S2912</name>
</gene>